<accession>P84604</accession>
<keyword id="KW-0903">Direct protein sequencing</keyword>
<keyword id="KW-0349">Heme</keyword>
<keyword id="KW-0408">Iron</keyword>
<keyword id="KW-0479">Metal-binding</keyword>
<keyword id="KW-0561">Oxygen transport</keyword>
<keyword id="KW-0813">Transport</keyword>
<protein>
    <recommendedName>
        <fullName>Hemoglobin subunit beta-2</fullName>
    </recommendedName>
    <alternativeName>
        <fullName>Beta-2-globin</fullName>
    </alternativeName>
    <alternativeName>
        <fullName>Hemoglobin beta-2 chain</fullName>
    </alternativeName>
</protein>
<sequence>MVEWTDSERAIINDIFATLDYEEIGRKSLTRCLIVYPWTQRYFGAFGNLYNAATIMANPLIAAHGTKILHGLDRALKNMDDIKNTYAELSLLHSDKLHVDPDNFRLLADCLTVVIAAKMGAAFTVDTQVAWQKFLSVVVSALGRQYH</sequence>
<dbReference type="SMR" id="P84604"/>
<dbReference type="GO" id="GO:0072562">
    <property type="term" value="C:blood microparticle"/>
    <property type="evidence" value="ECO:0007669"/>
    <property type="project" value="TreeGrafter"/>
</dbReference>
<dbReference type="GO" id="GO:0031838">
    <property type="term" value="C:haptoglobin-hemoglobin complex"/>
    <property type="evidence" value="ECO:0007669"/>
    <property type="project" value="TreeGrafter"/>
</dbReference>
<dbReference type="GO" id="GO:0005833">
    <property type="term" value="C:hemoglobin complex"/>
    <property type="evidence" value="ECO:0007669"/>
    <property type="project" value="InterPro"/>
</dbReference>
<dbReference type="GO" id="GO:0031720">
    <property type="term" value="F:haptoglobin binding"/>
    <property type="evidence" value="ECO:0007669"/>
    <property type="project" value="TreeGrafter"/>
</dbReference>
<dbReference type="GO" id="GO:0020037">
    <property type="term" value="F:heme binding"/>
    <property type="evidence" value="ECO:0007669"/>
    <property type="project" value="InterPro"/>
</dbReference>
<dbReference type="GO" id="GO:0046872">
    <property type="term" value="F:metal ion binding"/>
    <property type="evidence" value="ECO:0007669"/>
    <property type="project" value="UniProtKB-KW"/>
</dbReference>
<dbReference type="GO" id="GO:0043177">
    <property type="term" value="F:organic acid binding"/>
    <property type="evidence" value="ECO:0007669"/>
    <property type="project" value="TreeGrafter"/>
</dbReference>
<dbReference type="GO" id="GO:0019825">
    <property type="term" value="F:oxygen binding"/>
    <property type="evidence" value="ECO:0007669"/>
    <property type="project" value="InterPro"/>
</dbReference>
<dbReference type="GO" id="GO:0005344">
    <property type="term" value="F:oxygen carrier activity"/>
    <property type="evidence" value="ECO:0007669"/>
    <property type="project" value="UniProtKB-KW"/>
</dbReference>
<dbReference type="GO" id="GO:0004601">
    <property type="term" value="F:peroxidase activity"/>
    <property type="evidence" value="ECO:0007669"/>
    <property type="project" value="TreeGrafter"/>
</dbReference>
<dbReference type="GO" id="GO:0042744">
    <property type="term" value="P:hydrogen peroxide catabolic process"/>
    <property type="evidence" value="ECO:0007669"/>
    <property type="project" value="TreeGrafter"/>
</dbReference>
<dbReference type="CDD" id="cd08925">
    <property type="entry name" value="Hb-beta-like"/>
    <property type="match status" value="1"/>
</dbReference>
<dbReference type="FunFam" id="1.10.490.10:FF:000001">
    <property type="entry name" value="Hemoglobin subunit beta"/>
    <property type="match status" value="1"/>
</dbReference>
<dbReference type="Gene3D" id="1.10.490.10">
    <property type="entry name" value="Globins"/>
    <property type="match status" value="1"/>
</dbReference>
<dbReference type="InterPro" id="IPR000971">
    <property type="entry name" value="Globin"/>
</dbReference>
<dbReference type="InterPro" id="IPR009050">
    <property type="entry name" value="Globin-like_sf"/>
</dbReference>
<dbReference type="InterPro" id="IPR012292">
    <property type="entry name" value="Globin/Proto"/>
</dbReference>
<dbReference type="InterPro" id="IPR002337">
    <property type="entry name" value="Hemoglobin_b"/>
</dbReference>
<dbReference type="InterPro" id="IPR050056">
    <property type="entry name" value="Hemoglobin_oxygen_transport"/>
</dbReference>
<dbReference type="PANTHER" id="PTHR11442">
    <property type="entry name" value="HEMOGLOBIN FAMILY MEMBER"/>
    <property type="match status" value="1"/>
</dbReference>
<dbReference type="PANTHER" id="PTHR11442:SF7">
    <property type="entry name" value="HEMOGLOBIN SUBUNIT EPSILON"/>
    <property type="match status" value="1"/>
</dbReference>
<dbReference type="Pfam" id="PF00042">
    <property type="entry name" value="Globin"/>
    <property type="match status" value="1"/>
</dbReference>
<dbReference type="PRINTS" id="PR00814">
    <property type="entry name" value="BETAHAEM"/>
</dbReference>
<dbReference type="SUPFAM" id="SSF46458">
    <property type="entry name" value="Globin-like"/>
    <property type="match status" value="1"/>
</dbReference>
<dbReference type="PROSITE" id="PS01033">
    <property type="entry name" value="GLOBIN"/>
    <property type="match status" value="1"/>
</dbReference>
<comment type="function">
    <text evidence="2 3">Involved in oxygen transport from gills to the various peripheral tissues.</text>
</comment>
<comment type="subunit">
    <text evidence="2">Hb 3 is a heterotetramer of two alpha-2 and two beta-2 chains.</text>
</comment>
<comment type="tissue specificity">
    <text evidence="3">Red blood cells.</text>
</comment>
<comment type="miscellaneous">
    <text>Hb 3 displays a Bohr effect, which is enhanced by organophosphates, and a Root effect.</text>
</comment>
<comment type="similarity">
    <text evidence="1">Belongs to the globin family.</text>
</comment>
<name>HBB2_ARCGL</name>
<organism>
    <name type="scientific">Arctogadus glacialis</name>
    <name type="common">Arctic cod</name>
    <dbReference type="NCBI Taxonomy" id="185735"/>
    <lineage>
        <taxon>Eukaryota</taxon>
        <taxon>Metazoa</taxon>
        <taxon>Chordata</taxon>
        <taxon>Craniata</taxon>
        <taxon>Vertebrata</taxon>
        <taxon>Euteleostomi</taxon>
        <taxon>Actinopterygii</taxon>
        <taxon>Neopterygii</taxon>
        <taxon>Teleostei</taxon>
        <taxon>Neoteleostei</taxon>
        <taxon>Acanthomorphata</taxon>
        <taxon>Zeiogadaria</taxon>
        <taxon>Gadariae</taxon>
        <taxon>Gadiformes</taxon>
        <taxon>Gadoidei</taxon>
        <taxon>Gadidae</taxon>
        <taxon>Arctogadus</taxon>
    </lineage>
</organism>
<evidence type="ECO:0000255" key="1">
    <source>
        <dbReference type="PROSITE-ProRule" id="PRU00238"/>
    </source>
</evidence>
<evidence type="ECO:0000269" key="2">
    <source>
    </source>
</evidence>
<evidence type="ECO:0000305" key="3"/>
<reference evidence="3" key="1">
    <citation type="journal article" date="2006" name="J. Biol. Chem.">
        <title>The oxygen transport system in three species of the boreal fish family Gadidae. Molecular phylogeny of hemoglobin.</title>
        <authorList>
            <person name="Verde C."/>
            <person name="Balestrieri M."/>
            <person name="de Pascale D."/>
            <person name="Pagnozzi D."/>
            <person name="Lecointre G."/>
            <person name="di Prisco G."/>
        </authorList>
    </citation>
    <scope>PROTEIN SEQUENCE OF 2-147</scope>
    <scope>FUNCTION</scope>
    <scope>SUBUNIT</scope>
    <source>
        <tissue evidence="2">Blood</tissue>
    </source>
</reference>
<proteinExistence type="evidence at protein level"/>
<gene>
    <name type="primary">hbb2</name>
</gene>
<feature type="initiator methionine" description="Removed" evidence="2">
    <location>
        <position position="1"/>
    </location>
</feature>
<feature type="chain" id="PRO_0000247581" description="Hemoglobin subunit beta-2">
    <location>
        <begin position="2"/>
        <end position="147"/>
    </location>
</feature>
<feature type="domain" description="Globin" evidence="1">
    <location>
        <begin position="3"/>
        <end position="147"/>
    </location>
</feature>
<feature type="binding site" description="distal binding residue" evidence="1">
    <location>
        <position position="64"/>
    </location>
    <ligand>
        <name>heme b</name>
        <dbReference type="ChEBI" id="CHEBI:60344"/>
    </ligand>
    <ligandPart>
        <name>Fe</name>
        <dbReference type="ChEBI" id="CHEBI:18248"/>
    </ligandPart>
</feature>
<feature type="binding site" description="proximal binding residue" evidence="1">
    <location>
        <position position="93"/>
    </location>
    <ligand>
        <name>heme b</name>
        <dbReference type="ChEBI" id="CHEBI:60344"/>
    </ligand>
    <ligandPart>
        <name>Fe</name>
        <dbReference type="ChEBI" id="CHEBI:18248"/>
    </ligandPart>
</feature>